<name>TRMD_JANSC</name>
<organism>
    <name type="scientific">Jannaschia sp. (strain CCS1)</name>
    <dbReference type="NCBI Taxonomy" id="290400"/>
    <lineage>
        <taxon>Bacteria</taxon>
        <taxon>Pseudomonadati</taxon>
        <taxon>Pseudomonadota</taxon>
        <taxon>Alphaproteobacteria</taxon>
        <taxon>Rhodobacterales</taxon>
        <taxon>Roseobacteraceae</taxon>
        <taxon>Jannaschia</taxon>
    </lineage>
</organism>
<accession>Q28UF1</accession>
<keyword id="KW-0963">Cytoplasm</keyword>
<keyword id="KW-0489">Methyltransferase</keyword>
<keyword id="KW-1185">Reference proteome</keyword>
<keyword id="KW-0949">S-adenosyl-L-methionine</keyword>
<keyword id="KW-0808">Transferase</keyword>
<keyword id="KW-0819">tRNA processing</keyword>
<gene>
    <name evidence="1" type="primary">trmD</name>
    <name type="ordered locus">Jann_0744</name>
</gene>
<protein>
    <recommendedName>
        <fullName evidence="1">tRNA (guanine-N(1)-)-methyltransferase</fullName>
        <ecNumber evidence="1">2.1.1.228</ecNumber>
    </recommendedName>
    <alternativeName>
        <fullName evidence="1">M1G-methyltransferase</fullName>
    </alternativeName>
    <alternativeName>
        <fullName evidence="1">tRNA [GM37] methyltransferase</fullName>
    </alternativeName>
</protein>
<dbReference type="EC" id="2.1.1.228" evidence="1"/>
<dbReference type="EMBL" id="CP000264">
    <property type="protein sequence ID" value="ABD53661.1"/>
    <property type="status" value="ALT_INIT"/>
    <property type="molecule type" value="Genomic_DNA"/>
</dbReference>
<dbReference type="RefSeq" id="WP_011453869.1">
    <property type="nucleotide sequence ID" value="NC_007802.1"/>
</dbReference>
<dbReference type="SMR" id="Q28UF1"/>
<dbReference type="STRING" id="290400.Jann_0744"/>
<dbReference type="KEGG" id="jan:Jann_0744"/>
<dbReference type="eggNOG" id="COG0336">
    <property type="taxonomic scope" value="Bacteria"/>
</dbReference>
<dbReference type="HOGENOM" id="CLU_047363_0_1_5"/>
<dbReference type="OrthoDB" id="9807416at2"/>
<dbReference type="Proteomes" id="UP000008326">
    <property type="component" value="Chromosome"/>
</dbReference>
<dbReference type="GO" id="GO:0005829">
    <property type="term" value="C:cytosol"/>
    <property type="evidence" value="ECO:0007669"/>
    <property type="project" value="TreeGrafter"/>
</dbReference>
<dbReference type="GO" id="GO:0052906">
    <property type="term" value="F:tRNA (guanine(37)-N1)-methyltransferase activity"/>
    <property type="evidence" value="ECO:0007669"/>
    <property type="project" value="UniProtKB-UniRule"/>
</dbReference>
<dbReference type="GO" id="GO:0002939">
    <property type="term" value="P:tRNA N1-guanine methylation"/>
    <property type="evidence" value="ECO:0007669"/>
    <property type="project" value="TreeGrafter"/>
</dbReference>
<dbReference type="Gene3D" id="3.40.1280.10">
    <property type="match status" value="1"/>
</dbReference>
<dbReference type="Gene3D" id="1.10.1270.20">
    <property type="entry name" value="tRNA(m1g37)methyltransferase, domain 2"/>
    <property type="match status" value="1"/>
</dbReference>
<dbReference type="HAMAP" id="MF_00605">
    <property type="entry name" value="TrmD"/>
    <property type="match status" value="1"/>
</dbReference>
<dbReference type="InterPro" id="IPR029028">
    <property type="entry name" value="Alpha/beta_knot_MTases"/>
</dbReference>
<dbReference type="InterPro" id="IPR023148">
    <property type="entry name" value="tRNA_m1G_MeTrfase_C_sf"/>
</dbReference>
<dbReference type="InterPro" id="IPR002649">
    <property type="entry name" value="tRNA_m1G_MeTrfase_TrmD"/>
</dbReference>
<dbReference type="InterPro" id="IPR029026">
    <property type="entry name" value="tRNA_m1G_MTases_N"/>
</dbReference>
<dbReference type="InterPro" id="IPR016009">
    <property type="entry name" value="tRNA_MeTrfase_TRMD/TRM10"/>
</dbReference>
<dbReference type="NCBIfam" id="NF000648">
    <property type="entry name" value="PRK00026.1"/>
    <property type="match status" value="1"/>
</dbReference>
<dbReference type="NCBIfam" id="TIGR00088">
    <property type="entry name" value="trmD"/>
    <property type="match status" value="1"/>
</dbReference>
<dbReference type="PANTHER" id="PTHR46417">
    <property type="entry name" value="TRNA (GUANINE-N(1)-)-METHYLTRANSFERASE"/>
    <property type="match status" value="1"/>
</dbReference>
<dbReference type="PANTHER" id="PTHR46417:SF1">
    <property type="entry name" value="TRNA (GUANINE-N(1)-)-METHYLTRANSFERASE"/>
    <property type="match status" value="1"/>
</dbReference>
<dbReference type="Pfam" id="PF01746">
    <property type="entry name" value="tRNA_m1G_MT"/>
    <property type="match status" value="1"/>
</dbReference>
<dbReference type="PIRSF" id="PIRSF000386">
    <property type="entry name" value="tRNA_mtase"/>
    <property type="match status" value="1"/>
</dbReference>
<dbReference type="SUPFAM" id="SSF75217">
    <property type="entry name" value="alpha/beta knot"/>
    <property type="match status" value="1"/>
</dbReference>
<evidence type="ECO:0000255" key="1">
    <source>
        <dbReference type="HAMAP-Rule" id="MF_00605"/>
    </source>
</evidence>
<evidence type="ECO:0000305" key="2"/>
<feature type="chain" id="PRO_0000257425" description="tRNA (guanine-N(1)-)-methyltransferase">
    <location>
        <begin position="1"/>
        <end position="247"/>
    </location>
</feature>
<feature type="binding site" evidence="1">
    <location>
        <position position="126"/>
    </location>
    <ligand>
        <name>S-adenosyl-L-methionine</name>
        <dbReference type="ChEBI" id="CHEBI:59789"/>
    </ligand>
</feature>
<proteinExistence type="inferred from homology"/>
<comment type="function">
    <text evidence="1">Specifically methylates guanosine-37 in various tRNAs.</text>
</comment>
<comment type="catalytic activity">
    <reaction evidence="1">
        <text>guanosine(37) in tRNA + S-adenosyl-L-methionine = N(1)-methylguanosine(37) in tRNA + S-adenosyl-L-homocysteine + H(+)</text>
        <dbReference type="Rhea" id="RHEA:36899"/>
        <dbReference type="Rhea" id="RHEA-COMP:10145"/>
        <dbReference type="Rhea" id="RHEA-COMP:10147"/>
        <dbReference type="ChEBI" id="CHEBI:15378"/>
        <dbReference type="ChEBI" id="CHEBI:57856"/>
        <dbReference type="ChEBI" id="CHEBI:59789"/>
        <dbReference type="ChEBI" id="CHEBI:73542"/>
        <dbReference type="ChEBI" id="CHEBI:74269"/>
        <dbReference type="EC" id="2.1.1.228"/>
    </reaction>
</comment>
<comment type="subunit">
    <text evidence="1">Homodimer.</text>
</comment>
<comment type="subcellular location">
    <subcellularLocation>
        <location evidence="1">Cytoplasm</location>
    </subcellularLocation>
</comment>
<comment type="similarity">
    <text evidence="1">Belongs to the RNA methyltransferase TrmD family.</text>
</comment>
<comment type="sequence caution" evidence="2">
    <conflict type="erroneous initiation">
        <sequence resource="EMBL-CDS" id="ABD53661"/>
    </conflict>
</comment>
<reference key="1">
    <citation type="submission" date="2006-02" db="EMBL/GenBank/DDBJ databases">
        <title>Complete sequence of chromosome of Jannaschia sp. CCS1.</title>
        <authorList>
            <consortium name="US DOE Joint Genome Institute"/>
            <person name="Copeland A."/>
            <person name="Lucas S."/>
            <person name="Lapidus A."/>
            <person name="Barry K."/>
            <person name="Detter J.C."/>
            <person name="Glavina del Rio T."/>
            <person name="Hammon N."/>
            <person name="Israni S."/>
            <person name="Pitluck S."/>
            <person name="Brettin T."/>
            <person name="Bruce D."/>
            <person name="Han C."/>
            <person name="Tapia R."/>
            <person name="Gilna P."/>
            <person name="Chertkov O."/>
            <person name="Saunders E."/>
            <person name="Schmutz J."/>
            <person name="Larimer F."/>
            <person name="Land M."/>
            <person name="Kyrpides N."/>
            <person name="Lykidis A."/>
            <person name="Moran M.A."/>
            <person name="Belas R."/>
            <person name="Ye W."/>
            <person name="Buchan A."/>
            <person name="Gonzalez J.M."/>
            <person name="Schell M.A."/>
            <person name="Richardson P."/>
        </authorList>
    </citation>
    <scope>NUCLEOTIDE SEQUENCE [LARGE SCALE GENOMIC DNA]</scope>
    <source>
        <strain>CCS1</strain>
    </source>
</reference>
<sequence length="247" mass="26778">MTEHPRLAKAWCAKVITLFPETFPGVLGASLTGKALQKGLWALEPIDLRTFGTGKHRQVDDTPAGGGAGLVLKPDVMARALDIAARGTPADRADWPIVYLSPRGKPFEQRDAERFASAKGITLVCGRFEGVDQRVIDAYGMEEICVGDAVLTGGEIAAQLVLDATTRLIPGVLGNADSTQEESFSDGLLEHPQYTKPADWRGHTIPPVLLSGDHGKVAEWRKAQAEALTQERRPDLWVKVAKPKKPR</sequence>